<organism>
    <name type="scientific">Fungal sp. (strain ATCC 74256)</name>
    <dbReference type="NCBI Taxonomy" id="1729595"/>
    <lineage>
        <taxon>Eukaryota</taxon>
        <taxon>Fungi</taxon>
    </lineage>
</organism>
<gene>
    <name evidence="6" type="primary">phiL</name>
</gene>
<keyword id="KW-0325">Glycoprotein</keyword>
<keyword id="KW-0472">Membrane</keyword>
<keyword id="KW-0812">Transmembrane</keyword>
<keyword id="KW-1133">Transmembrane helix</keyword>
<keyword id="KW-0813">Transport</keyword>
<proteinExistence type="evidence at protein level"/>
<accession>A0A348HAY7</accession>
<name>PHIL_FUNX7</name>
<dbReference type="EMBL" id="LC086931">
    <property type="protein sequence ID" value="BBG28509.1"/>
    <property type="molecule type" value="Genomic_DNA"/>
</dbReference>
<dbReference type="GO" id="GO:0005886">
    <property type="term" value="C:plasma membrane"/>
    <property type="evidence" value="ECO:0007669"/>
    <property type="project" value="TreeGrafter"/>
</dbReference>
<dbReference type="GO" id="GO:0022857">
    <property type="term" value="F:transmembrane transporter activity"/>
    <property type="evidence" value="ECO:0007669"/>
    <property type="project" value="InterPro"/>
</dbReference>
<dbReference type="Gene3D" id="1.20.1250.20">
    <property type="entry name" value="MFS general substrate transporter like domains"/>
    <property type="match status" value="1"/>
</dbReference>
<dbReference type="InterPro" id="IPR011701">
    <property type="entry name" value="MFS"/>
</dbReference>
<dbReference type="InterPro" id="IPR020846">
    <property type="entry name" value="MFS_dom"/>
</dbReference>
<dbReference type="InterPro" id="IPR036259">
    <property type="entry name" value="MFS_trans_sf"/>
</dbReference>
<dbReference type="PANTHER" id="PTHR23502">
    <property type="entry name" value="MAJOR FACILITATOR SUPERFAMILY"/>
    <property type="match status" value="1"/>
</dbReference>
<dbReference type="PANTHER" id="PTHR23502:SF144">
    <property type="entry name" value="MAJOR FACILITATOR SUPERFAMILY (MFS) PROFILE DOMAIN-CONTAINING PROTEIN"/>
    <property type="match status" value="1"/>
</dbReference>
<dbReference type="Pfam" id="PF07690">
    <property type="entry name" value="MFS_1"/>
    <property type="match status" value="1"/>
</dbReference>
<dbReference type="SUPFAM" id="SSF103473">
    <property type="entry name" value="MFS general substrate transporter"/>
    <property type="match status" value="1"/>
</dbReference>
<dbReference type="PROSITE" id="PS50850">
    <property type="entry name" value="MFS"/>
    <property type="match status" value="1"/>
</dbReference>
<protein>
    <recommendedName>
        <fullName evidence="6">MFS-type transporter phiL</fullName>
    </recommendedName>
    <alternativeName>
        <fullName evidence="6">Phomoidride biosynthesis cluster protein L</fullName>
    </alternativeName>
</protein>
<sequence>MVFQGLSPTFVGSLSDTIGRRPVYIFCFVTYIAANVGLALSNSFIALLLLRCLQSTGSSSTVNLAYGVTADVVTSAERGRYIGLASVGPIIGPSLGPVLGGVITQYLGWRYIFVILAAAALIFLFLLIIFFPETCRNLVGNGSIPPKSLWNRSLVSLFKKGSKLEDHASGRNLPNAGSKKSNPRNTNPLKALNVLFEYPTSPVIIFNGLSYAIYYAITSSLSYSFHDNYYFDDIHVGLSYIPIGVGTIIAALGNGFVVDWNYRRLANKAGIDIDQGRHMDYETGKRLGFSIEKARLQIAVPAVVVACISMLGYAWTMSLRLPPIIPLLCLFVFGWGGTAAYSCMNVLIVDINYSSAASATAANNLVRCLLGAGGAAVIMPLINVLGMGWTFTAIAGLWVLLSPLVLFLLFRREEVYDEISDSE</sequence>
<evidence type="ECO:0000255" key="1"/>
<evidence type="ECO:0000255" key="2">
    <source>
        <dbReference type="PROSITE-ProRule" id="PRU00498"/>
    </source>
</evidence>
<evidence type="ECO:0000256" key="3">
    <source>
        <dbReference type="SAM" id="MobiDB-lite"/>
    </source>
</evidence>
<evidence type="ECO:0000269" key="4">
    <source>
    </source>
</evidence>
<evidence type="ECO:0000269" key="5">
    <source>
    </source>
</evidence>
<evidence type="ECO:0000303" key="6">
    <source>
    </source>
</evidence>
<evidence type="ECO:0000305" key="7"/>
<reference key="1">
    <citation type="journal article" date="2015" name="Org. Lett.">
        <title>Biosynthetic study on antihypercholesterolemic agent phomoidride: general biogenesis of fungal dimeric anhydrides.</title>
        <authorList>
            <person name="Fujii R."/>
            <person name="Matsu Y."/>
            <person name="Minami A."/>
            <person name="Nagamine S."/>
            <person name="Takeuchi I."/>
            <person name="Gomi K."/>
            <person name="Oikawa H."/>
        </authorList>
    </citation>
    <scope>NUCLEOTIDE SEQUENCE [GENOMIC DNA]</scope>
    <source>
        <strain>ATCC 74256</strain>
    </source>
</reference>
<reference key="2">
    <citation type="journal article" date="1997" name="J. Antibiot.">
        <title>CP-225,917 and CP-263,114, novel Ras farnesylation inhibitors from an unidentified fungus. I. Taxonomy, fermentation, isolation, and biochemical properties.</title>
        <authorList>
            <person name="Dabrah T.T."/>
            <person name="Harwood H.J. Jr."/>
            <person name="Huang L.H."/>
            <person name="Jankovich N.D."/>
            <person name="Kaneko T."/>
            <person name="Li J.C."/>
            <person name="Lindsey S."/>
            <person name="Moshier P.M."/>
            <person name="Subashi T.A."/>
            <person name="Therrien M."/>
            <person name="Watts P.C."/>
        </authorList>
    </citation>
    <scope>BIOTECHNOLOGY</scope>
</reference>
<reference key="3">
    <citation type="journal article" date="2022" name="J. Am. Chem. Soc.">
        <title>Elucidation of late-stage biosynthesis of phomoidride: proposal of cyclization mechanism affording characteristic nine-membered ring of fungal dimeric anhydride.</title>
        <authorList>
            <person name="Yamamoto S."/>
            <person name="Matsuyama T."/>
            <person name="Ozaki T."/>
            <person name="Takino J."/>
            <person name="Sato H."/>
            <person name="Uchiyama M."/>
            <person name="Minami A."/>
            <person name="Oikawa H."/>
        </authorList>
    </citation>
    <scope>FUNCTION</scope>
</reference>
<feature type="chain" id="PRO_0000458954" description="MFS-type transporter phiL">
    <location>
        <begin position="1"/>
        <end position="423"/>
    </location>
</feature>
<feature type="transmembrane region" description="Helical" evidence="1">
    <location>
        <begin position="25"/>
        <end position="45"/>
    </location>
</feature>
<feature type="transmembrane region" description="Helical" evidence="1">
    <location>
        <begin position="82"/>
        <end position="102"/>
    </location>
</feature>
<feature type="transmembrane region" description="Helical" evidence="1">
    <location>
        <begin position="111"/>
        <end position="131"/>
    </location>
</feature>
<feature type="transmembrane region" description="Helical" evidence="1">
    <location>
        <begin position="203"/>
        <end position="223"/>
    </location>
</feature>
<feature type="transmembrane region" description="Helical" evidence="1">
    <location>
        <begin position="238"/>
        <end position="258"/>
    </location>
</feature>
<feature type="transmembrane region" description="Helical" evidence="1">
    <location>
        <begin position="298"/>
        <end position="318"/>
    </location>
</feature>
<feature type="transmembrane region" description="Helical" evidence="1">
    <location>
        <begin position="321"/>
        <end position="341"/>
    </location>
</feature>
<feature type="transmembrane region" description="Helical" evidence="1">
    <location>
        <begin position="369"/>
        <end position="389"/>
    </location>
</feature>
<feature type="transmembrane region" description="Helical" evidence="1">
    <location>
        <begin position="390"/>
        <end position="410"/>
    </location>
</feature>
<feature type="region of interest" description="Disordered" evidence="3">
    <location>
        <begin position="166"/>
        <end position="185"/>
    </location>
</feature>
<feature type="glycosylation site" description="N-linked (GlcNAc...) asparagine" evidence="2">
    <location>
        <position position="141"/>
    </location>
</feature>
<feature type="glycosylation site" description="N-linked (GlcNAc...) asparagine" evidence="2">
    <location>
        <position position="151"/>
    </location>
</feature>
<feature type="glycosylation site" description="N-linked (GlcNAc...) asparagine" evidence="2">
    <location>
        <position position="352"/>
    </location>
</feature>
<comment type="function">
    <text evidence="4">MFS-type transporter; part of the gene cluster that mediates the biosynthesis of the antihypercholesterolemic agents phomoidrides which are dimeric anhydrides.</text>
</comment>
<comment type="subcellular location">
    <subcellularLocation>
        <location evidence="1">Membrane</location>
        <topology evidence="1">Multi-pass membrane protein</topology>
    </subcellularLocation>
</comment>
<comment type="biotechnology">
    <text evidence="5">Phomoidrides A and B (also known as CP-225,917 and CP-263,114) are potent inhibitors of Ras farnesyltransferase and squalene synthase (PubMed:9066758). CP-225,917 and CP-263,114 inhibit Ras farnesyl transferase from rat brain with IC(50) values of 6 uM and 20 uoM, respectively (PubMed:9066758). CP-225,917 inhibits squalene synthase with an IC(50) value of 43 uM and CP-263,114 with an IC(50) of 160 uM (PubMed:9066758).</text>
</comment>
<comment type="similarity">
    <text evidence="7">Belongs to the major facilitator superfamily. CAR1 family.</text>
</comment>